<reference key="1">
    <citation type="journal article" date="2012" name="Sci. Rep.">
        <title>Genomic perspectives on the evolution of fungal entomopathogenicity in Beauveria bassiana.</title>
        <authorList>
            <person name="Xiao G."/>
            <person name="Ying S.-H."/>
            <person name="Zheng P."/>
            <person name="Wang Z.-L."/>
            <person name="Zhang S."/>
            <person name="Xie X.-Q."/>
            <person name="Shang Y."/>
            <person name="St Leger R.J."/>
            <person name="Zhao G.-P."/>
            <person name="Wang C."/>
            <person name="Feng M.-G."/>
        </authorList>
    </citation>
    <scope>NUCLEOTIDE SEQUENCE [LARGE SCALE GENOMIC DNA]</scope>
    <source>
        <strain>ARSEF 2860</strain>
    </source>
</reference>
<reference key="2">
    <citation type="journal article" date="2021" name="MBio">
        <title>Inductive production of the iron-chelating 2-pyridones benefits the producing fungus to compete for diverse niches.</title>
        <authorList>
            <person name="Chen B."/>
            <person name="Sun Y."/>
            <person name="Li S."/>
            <person name="Yin Y."/>
            <person name="Wang C."/>
        </authorList>
    </citation>
    <scope>FUNCTION</scope>
</reference>
<dbReference type="EMBL" id="JH725173">
    <property type="protein sequence ID" value="EJP63690.1"/>
    <property type="molecule type" value="Genomic_DNA"/>
</dbReference>
<dbReference type="RefSeq" id="XP_008600653.1">
    <property type="nucleotide sequence ID" value="XM_008602431.1"/>
</dbReference>
<dbReference type="STRING" id="655819.J4VZG1"/>
<dbReference type="GeneID" id="19890346"/>
<dbReference type="HOGENOM" id="CLU_007091_4_0_1"/>
<dbReference type="InParanoid" id="J4VZG1"/>
<dbReference type="OrthoDB" id="8293at474943"/>
<dbReference type="Proteomes" id="UP000002762">
    <property type="component" value="Unassembled WGS sequence"/>
</dbReference>
<dbReference type="GO" id="GO:0005634">
    <property type="term" value="C:nucleus"/>
    <property type="evidence" value="ECO:0007669"/>
    <property type="project" value="UniProtKB-SubCell"/>
</dbReference>
<dbReference type="GO" id="GO:0001228">
    <property type="term" value="F:DNA-binding transcription activator activity, RNA polymerase II-specific"/>
    <property type="evidence" value="ECO:0007669"/>
    <property type="project" value="TreeGrafter"/>
</dbReference>
<dbReference type="GO" id="GO:0000978">
    <property type="term" value="F:RNA polymerase II cis-regulatory region sequence-specific DNA binding"/>
    <property type="evidence" value="ECO:0007669"/>
    <property type="project" value="TreeGrafter"/>
</dbReference>
<dbReference type="GO" id="GO:0008270">
    <property type="term" value="F:zinc ion binding"/>
    <property type="evidence" value="ECO:0007669"/>
    <property type="project" value="InterPro"/>
</dbReference>
<dbReference type="GO" id="GO:0006351">
    <property type="term" value="P:DNA-templated transcription"/>
    <property type="evidence" value="ECO:0007669"/>
    <property type="project" value="InterPro"/>
</dbReference>
<dbReference type="CDD" id="cd12148">
    <property type="entry name" value="fungal_TF_MHR"/>
    <property type="match status" value="1"/>
</dbReference>
<dbReference type="CDD" id="cd00067">
    <property type="entry name" value="GAL4"/>
    <property type="match status" value="1"/>
</dbReference>
<dbReference type="Gene3D" id="4.10.240.10">
    <property type="entry name" value="Zn(2)-C6 fungal-type DNA-binding domain"/>
    <property type="match status" value="1"/>
</dbReference>
<dbReference type="InterPro" id="IPR051430">
    <property type="entry name" value="Fungal_TF_Env_Response"/>
</dbReference>
<dbReference type="InterPro" id="IPR007219">
    <property type="entry name" value="Transcription_factor_dom_fun"/>
</dbReference>
<dbReference type="InterPro" id="IPR036864">
    <property type="entry name" value="Zn2-C6_fun-type_DNA-bd_sf"/>
</dbReference>
<dbReference type="InterPro" id="IPR001138">
    <property type="entry name" value="Zn2Cys6_DnaBD"/>
</dbReference>
<dbReference type="PANTHER" id="PTHR31944:SF129">
    <property type="entry name" value="ASPYRIDONES CLUSTER REGULATOR APDR-RELATED"/>
    <property type="match status" value="1"/>
</dbReference>
<dbReference type="PANTHER" id="PTHR31944">
    <property type="entry name" value="HEME-RESPONSIVE ZINC FINGER TRANSCRIPTION FACTOR HAP1"/>
    <property type="match status" value="1"/>
</dbReference>
<dbReference type="Pfam" id="PF04082">
    <property type="entry name" value="Fungal_trans"/>
    <property type="match status" value="1"/>
</dbReference>
<dbReference type="Pfam" id="PF00172">
    <property type="entry name" value="Zn_clus"/>
    <property type="match status" value="1"/>
</dbReference>
<dbReference type="SMART" id="SM00066">
    <property type="entry name" value="GAL4"/>
    <property type="match status" value="1"/>
</dbReference>
<dbReference type="SUPFAM" id="SSF57701">
    <property type="entry name" value="Zn2/Cys6 DNA-binding domain"/>
    <property type="match status" value="1"/>
</dbReference>
<dbReference type="PROSITE" id="PS00463">
    <property type="entry name" value="ZN2_CY6_FUNGAL_1"/>
    <property type="match status" value="1"/>
</dbReference>
<dbReference type="PROSITE" id="PS50048">
    <property type="entry name" value="ZN2_CY6_FUNGAL_2"/>
    <property type="match status" value="1"/>
</dbReference>
<feature type="chain" id="PRO_0000455685" description="Transcription factor tenR">
    <location>
        <begin position="1"/>
        <end position="875"/>
    </location>
</feature>
<feature type="DNA-binding region" description="Zn(2)-C6 fungal-type" evidence="1">
    <location>
        <begin position="16"/>
        <end position="44"/>
    </location>
</feature>
<feature type="region of interest" description="Disordered" evidence="2">
    <location>
        <begin position="54"/>
        <end position="73"/>
    </location>
</feature>
<feature type="region of interest" description="Disordered" evidence="2">
    <location>
        <begin position="136"/>
        <end position="172"/>
    </location>
</feature>
<feature type="region of interest" description="Disordered" evidence="2">
    <location>
        <begin position="620"/>
        <end position="642"/>
    </location>
</feature>
<feature type="compositionally biased region" description="Polar residues" evidence="2">
    <location>
        <begin position="153"/>
        <end position="168"/>
    </location>
</feature>
<feature type="compositionally biased region" description="Polar residues" evidence="2">
    <location>
        <begin position="627"/>
        <end position="642"/>
    </location>
</feature>
<organism>
    <name type="scientific">Beauveria bassiana (strain ARSEF 2860)</name>
    <name type="common">White muscardine disease fungus</name>
    <name type="synonym">Tritirachium shiotae</name>
    <dbReference type="NCBI Taxonomy" id="655819"/>
    <lineage>
        <taxon>Eukaryota</taxon>
        <taxon>Fungi</taxon>
        <taxon>Dikarya</taxon>
        <taxon>Ascomycota</taxon>
        <taxon>Pezizomycotina</taxon>
        <taxon>Sordariomycetes</taxon>
        <taxon>Hypocreomycetidae</taxon>
        <taxon>Hypocreales</taxon>
        <taxon>Cordycipitaceae</taxon>
        <taxon>Beauveria</taxon>
    </lineage>
</organism>
<keyword id="KW-0238">DNA-binding</keyword>
<keyword id="KW-0479">Metal-binding</keyword>
<keyword id="KW-0539">Nucleus</keyword>
<keyword id="KW-1185">Reference proteome</keyword>
<keyword id="KW-0804">Transcription</keyword>
<keyword id="KW-0805">Transcription regulation</keyword>
<keyword id="KW-0862">Zinc</keyword>
<evidence type="ECO:0000255" key="1">
    <source>
        <dbReference type="PROSITE-ProRule" id="PRU00227"/>
    </source>
</evidence>
<evidence type="ECO:0000256" key="2">
    <source>
        <dbReference type="SAM" id="MobiDB-lite"/>
    </source>
</evidence>
<evidence type="ECO:0000269" key="3">
    <source>
    </source>
</evidence>
<evidence type="ECO:0000303" key="4">
    <source>
    </source>
</evidence>
<name>TENR_BEAB2</name>
<gene>
    <name evidence="4" type="primary">tenR</name>
    <name type="ORF">BBA_07334</name>
</gene>
<comment type="function">
    <text evidence="3">Transcription factor that positively regulates the expression of the genes that mediate the biosynthesis of tenellin-type 2-pyridones, iron-chelating compounds involved in iron stress tolerance, competition with the natural competitor fungus Metarhizium robertsii and insect hosts infection.</text>
</comment>
<comment type="subcellular location">
    <subcellularLocation>
        <location evidence="1">Nucleus</location>
    </subcellularLocation>
</comment>
<protein>
    <recommendedName>
        <fullName evidence="4">Transcription factor tenR</fullName>
    </recommendedName>
    <alternativeName>
        <fullName evidence="4">Tenellin-type 2-pyridones biosynthesis cluster regulator</fullName>
    </alternativeName>
</protein>
<accession>J4VZG1</accession>
<proteinExistence type="inferred from homology"/>
<sequence>MEPGPAHRRRRPAVACSECRRRKIRCDRGFPCGPCRKSLPALSCIYHSQPRAYAASAPPRPHTAQHQPRPKVNNTHSVDLTKFNLPSFESDAFHGLDQFGIDWQPSWEHQITPPTGHLADAGADYFQSPTFSVIDDHEKKESTNHSRARQGYPGSTETINPGSVSHSAGVNPDSGDDRWYQILARIGKVEYLIRDITRHQSSDEAQLVPILRDLYEAEPDECLRLPPLSGIVLKLENQARLQKQQDDKQSLARLSPLLDASSKIHQLLPPRQACKKLVSAYFETFGSVLCILDTAVFTSEFERFWEAIDASRVPSTDHEEAFAHKLLVVIALGSVTCPSSPGAASSEAERARQTSRRNHAIMCVQHTRQWLAQKTARGIRADLDVAQILCLLALARQTQLHTDPWPRRPSMDGTVILTGDHDLARLGMQMGLHREPRTGSMAKPAKEAETELRRRLWATMLELSLHQYLDAELPPPLGADSYDCATPSSNGVEEEPRSYFVPDSLRVPASTVLAALSRTQRLRLRVLEHLHASGASKDIQESQRLAIELSQAFNSEVNSLLSPASTQPTSFQLWLLNVFVRPFILALGVPLSGESRNRFADYYLRRLRLENAVAMLRPGPHEDGPRSIQSQISSHAGQTGSRTKTAATAYPFLPTPGTAEPCNTSSEQHFGTHKAACTSLYIGGPSYYAVVHRQVVASLCADVVAEIEDDMFPNLDAAMLHRIVAILEDAVNEYRDQVHASAGAHACHEFILFAAAHSLALASLNRSSAREVKESVMSSVWMALHHCCQAMGEPAEAMLETEWGTEAVQQTATESQSVNRSVSDADKGYEIDAQLQGVKYMLQQQSDAASTADGEIADMWAFDDDESYLSVGLPL</sequence>